<proteinExistence type="predicted"/>
<accession>O50843</accession>
<sequence>MRKRGEIEKKARLQKFMQTTSDLTNLVKMAGLEAYSISHKLKDLEKGIENYEDNNNSTKDTLNQSLKDVIYEITKLSSLIEAKDKIDQRKKLGYQTEQEFDAKFINLKNIKDKLKTLCGKAKGHLGSNLSSVTIDGITKEKVAQAYLIIKLIHKTLIYMNDDSKGSLATILNDLEKDAKSI</sequence>
<dbReference type="EMBL" id="AE000788">
    <property type="protein sequence ID" value="AAC66178.2"/>
    <property type="molecule type" value="Genomic_DNA"/>
</dbReference>
<dbReference type="PIR" id="A70256">
    <property type="entry name" value="A70256"/>
</dbReference>
<dbReference type="RefSeq" id="NP_045613.2">
    <property type="nucleotide sequence ID" value="NC_001855.1"/>
</dbReference>
<dbReference type="RefSeq" id="WP_010890348.1">
    <property type="nucleotide sequence ID" value="NC_001855.1"/>
</dbReference>
<dbReference type="SMR" id="O50843"/>
<dbReference type="EnsemblBacteria" id="AAC66178">
    <property type="protein sequence ID" value="AAC66178"/>
    <property type="gene ID" value="BB_K41"/>
</dbReference>
<dbReference type="KEGG" id="bbu:BB_K41"/>
<dbReference type="PATRIC" id="fig|224326.49.peg.1460"/>
<dbReference type="HOGENOM" id="CLU_1486330_0_0_12"/>
<dbReference type="OrthoDB" id="9961249at2"/>
<dbReference type="Proteomes" id="UP000001807">
    <property type="component" value="Plasmid lp36"/>
</dbReference>
<organism>
    <name type="scientific">Borreliella burgdorferi (strain ATCC 35210 / DSM 4680 / CIP 102532 / B31)</name>
    <name type="common">Borrelia burgdorferi</name>
    <dbReference type="NCBI Taxonomy" id="224326"/>
    <lineage>
        <taxon>Bacteria</taxon>
        <taxon>Pseudomonadati</taxon>
        <taxon>Spirochaetota</taxon>
        <taxon>Spirochaetia</taxon>
        <taxon>Spirochaetales</taxon>
        <taxon>Borreliaceae</taxon>
        <taxon>Borreliella</taxon>
    </lineage>
</organism>
<feature type="chain" id="PRO_0000174431" description="Uncharacterized protein BB_K41">
    <location>
        <begin position="1"/>
        <end position="181"/>
    </location>
</feature>
<gene>
    <name type="ordered locus">BB_K41</name>
</gene>
<geneLocation type="plasmid">
    <name>lp36</name>
</geneLocation>
<keyword id="KW-0614">Plasmid</keyword>
<keyword id="KW-1185">Reference proteome</keyword>
<reference key="1">
    <citation type="journal article" date="1997" name="Nature">
        <title>Genomic sequence of a Lyme disease spirochaete, Borrelia burgdorferi.</title>
        <authorList>
            <person name="Fraser C.M."/>
            <person name="Casjens S."/>
            <person name="Huang W.M."/>
            <person name="Sutton G.G."/>
            <person name="Clayton R.A."/>
            <person name="Lathigra R."/>
            <person name="White O."/>
            <person name="Ketchum K.A."/>
            <person name="Dodson R.J."/>
            <person name="Hickey E.K."/>
            <person name="Gwinn M.L."/>
            <person name="Dougherty B.A."/>
            <person name="Tomb J.-F."/>
            <person name="Fleischmann R.D."/>
            <person name="Richardson D.L."/>
            <person name="Peterson J.D."/>
            <person name="Kerlavage A.R."/>
            <person name="Quackenbush J."/>
            <person name="Salzberg S.L."/>
            <person name="Hanson M."/>
            <person name="van Vugt R."/>
            <person name="Palmer N."/>
            <person name="Adams M.D."/>
            <person name="Gocayne J.D."/>
            <person name="Weidman J.F."/>
            <person name="Utterback T.R."/>
            <person name="Watthey L."/>
            <person name="McDonald L.A."/>
            <person name="Artiach P."/>
            <person name="Bowman C."/>
            <person name="Garland S.A."/>
            <person name="Fujii C."/>
            <person name="Cotton M.D."/>
            <person name="Horst K."/>
            <person name="Roberts K.M."/>
            <person name="Hatch B."/>
            <person name="Smith H.O."/>
            <person name="Venter J.C."/>
        </authorList>
    </citation>
    <scope>NUCLEOTIDE SEQUENCE [LARGE SCALE GENOMIC DNA]</scope>
    <source>
        <strain>ATCC 35210 / DSM 4680 / CIP 102532 / B31</strain>
    </source>
</reference>
<protein>
    <recommendedName>
        <fullName>Uncharacterized protein BB_K41</fullName>
    </recommendedName>
</protein>
<name>Y3010_BORBU</name>